<name>SFSA_KLEP7</name>
<proteinExistence type="inferred from homology"/>
<protein>
    <recommendedName>
        <fullName evidence="1">Sugar fermentation stimulation protein homolog</fullName>
    </recommendedName>
</protein>
<evidence type="ECO:0000255" key="1">
    <source>
        <dbReference type="HAMAP-Rule" id="MF_00095"/>
    </source>
</evidence>
<sequence length="238" mass="26390">MQFDPPLQPAILLKRYKRFLADVVTPDGRELTLHCPNTGAMTGCAAPGDTVWYSTSDNAKRKYAHTWELTETQQGAVICVNTLRANSLAKEAISAGIIPELSGYNQLKSEVKYGEENSRIDIMLQADDRQNCYIEVKSVTLAEKEYGYFPDAVTTRGQKHLRELMAVAANGDRAVILFAVLHSAIDRFSPAHHIDARYAQLLTEAQDKGVEILAWKAELSTTRMTLNKPIAVVLNPGK</sequence>
<reference key="1">
    <citation type="submission" date="2006-09" db="EMBL/GenBank/DDBJ databases">
        <authorList>
            <consortium name="The Klebsiella pneumonia Genome Sequencing Project"/>
            <person name="McClelland M."/>
            <person name="Sanderson E.K."/>
            <person name="Spieth J."/>
            <person name="Clifton W.S."/>
            <person name="Latreille P."/>
            <person name="Sabo A."/>
            <person name="Pepin K."/>
            <person name="Bhonagiri V."/>
            <person name="Porwollik S."/>
            <person name="Ali J."/>
            <person name="Wilson R.K."/>
        </authorList>
    </citation>
    <scope>NUCLEOTIDE SEQUENCE [LARGE SCALE GENOMIC DNA]</scope>
    <source>
        <strain>ATCC 700721 / MGH 78578</strain>
    </source>
</reference>
<organism>
    <name type="scientific">Klebsiella pneumoniae subsp. pneumoniae (strain ATCC 700721 / MGH 78578)</name>
    <dbReference type="NCBI Taxonomy" id="272620"/>
    <lineage>
        <taxon>Bacteria</taxon>
        <taxon>Pseudomonadati</taxon>
        <taxon>Pseudomonadota</taxon>
        <taxon>Gammaproteobacteria</taxon>
        <taxon>Enterobacterales</taxon>
        <taxon>Enterobacteriaceae</taxon>
        <taxon>Klebsiella/Raoultella group</taxon>
        <taxon>Klebsiella</taxon>
        <taxon>Klebsiella pneumoniae complex</taxon>
    </lineage>
</organism>
<accession>A6T4T5</accession>
<comment type="similarity">
    <text evidence="1">Belongs to the SfsA family.</text>
</comment>
<dbReference type="EMBL" id="CP000647">
    <property type="protein sequence ID" value="ABR75606.1"/>
    <property type="molecule type" value="Genomic_DNA"/>
</dbReference>
<dbReference type="RefSeq" id="WP_002888848.1">
    <property type="nucleotide sequence ID" value="NC_009648.1"/>
</dbReference>
<dbReference type="SMR" id="A6T4T5"/>
<dbReference type="STRING" id="272620.KPN_00146"/>
<dbReference type="PaxDb" id="272620-KPN_00146"/>
<dbReference type="EnsemblBacteria" id="ABR75606">
    <property type="protein sequence ID" value="ABR75606"/>
    <property type="gene ID" value="KPN_00146"/>
</dbReference>
<dbReference type="KEGG" id="kpn:KPN_00146"/>
<dbReference type="HOGENOM" id="CLU_052299_2_0_6"/>
<dbReference type="Proteomes" id="UP000000265">
    <property type="component" value="Chromosome"/>
</dbReference>
<dbReference type="GO" id="GO:0003677">
    <property type="term" value="F:DNA binding"/>
    <property type="evidence" value="ECO:0007669"/>
    <property type="project" value="InterPro"/>
</dbReference>
<dbReference type="CDD" id="cd22359">
    <property type="entry name" value="SfsA-like_bacterial"/>
    <property type="match status" value="1"/>
</dbReference>
<dbReference type="FunFam" id="2.40.50.580:FF:000001">
    <property type="entry name" value="Sugar fermentation stimulation protein A"/>
    <property type="match status" value="1"/>
</dbReference>
<dbReference type="FunFam" id="3.40.1350.60:FF:000001">
    <property type="entry name" value="Sugar fermentation stimulation protein A"/>
    <property type="match status" value="1"/>
</dbReference>
<dbReference type="Gene3D" id="2.40.50.580">
    <property type="match status" value="1"/>
</dbReference>
<dbReference type="Gene3D" id="3.40.1350.60">
    <property type="match status" value="1"/>
</dbReference>
<dbReference type="HAMAP" id="MF_00095">
    <property type="entry name" value="SfsA"/>
    <property type="match status" value="1"/>
</dbReference>
<dbReference type="InterPro" id="IPR005224">
    <property type="entry name" value="SfsA"/>
</dbReference>
<dbReference type="InterPro" id="IPR040452">
    <property type="entry name" value="SfsA_C"/>
</dbReference>
<dbReference type="InterPro" id="IPR041465">
    <property type="entry name" value="SfsA_N"/>
</dbReference>
<dbReference type="NCBIfam" id="TIGR00230">
    <property type="entry name" value="sfsA"/>
    <property type="match status" value="1"/>
</dbReference>
<dbReference type="PANTHER" id="PTHR30545">
    <property type="entry name" value="SUGAR FERMENTATION STIMULATION PROTEIN A"/>
    <property type="match status" value="1"/>
</dbReference>
<dbReference type="PANTHER" id="PTHR30545:SF2">
    <property type="entry name" value="SUGAR FERMENTATION STIMULATION PROTEIN A"/>
    <property type="match status" value="1"/>
</dbReference>
<dbReference type="Pfam" id="PF03749">
    <property type="entry name" value="SfsA"/>
    <property type="match status" value="1"/>
</dbReference>
<dbReference type="Pfam" id="PF17746">
    <property type="entry name" value="SfsA_N"/>
    <property type="match status" value="1"/>
</dbReference>
<gene>
    <name evidence="1" type="primary">sfsA</name>
    <name type="ordered locus">KPN78578_01450</name>
    <name type="ORF">KPN_00146</name>
</gene>
<feature type="chain" id="PRO_1000007991" description="Sugar fermentation stimulation protein homolog">
    <location>
        <begin position="1"/>
        <end position="238"/>
    </location>
</feature>